<name>Y372_PYRAE</name>
<proteinExistence type="inferred from homology"/>
<comment type="similarity">
    <text evidence="1">Belongs to the UPF0284 family.</text>
</comment>
<keyword id="KW-1185">Reference proteome</keyword>
<dbReference type="EMBL" id="AE009441">
    <property type="protein sequence ID" value="AAL62748.1"/>
    <property type="molecule type" value="Genomic_DNA"/>
</dbReference>
<dbReference type="RefSeq" id="WP_011007220.1">
    <property type="nucleotide sequence ID" value="NC_003364.1"/>
</dbReference>
<dbReference type="SMR" id="Q8ZZ93"/>
<dbReference type="STRING" id="178306.PAE0372"/>
<dbReference type="EnsemblBacteria" id="AAL62748">
    <property type="protein sequence ID" value="AAL62748"/>
    <property type="gene ID" value="PAE0372"/>
</dbReference>
<dbReference type="GeneID" id="1464968"/>
<dbReference type="KEGG" id="pai:PAE0372"/>
<dbReference type="PATRIC" id="fig|178306.9.peg.282"/>
<dbReference type="eggNOG" id="arCOG04272">
    <property type="taxonomic scope" value="Archaea"/>
</dbReference>
<dbReference type="HOGENOM" id="CLU_053134_0_0_2"/>
<dbReference type="InParanoid" id="Q8ZZ93"/>
<dbReference type="Proteomes" id="UP000002439">
    <property type="component" value="Chromosome"/>
</dbReference>
<dbReference type="GO" id="GO:0008939">
    <property type="term" value="F:nicotinate-nucleotide-dimethylbenzimidazole phosphoribosyltransferase activity"/>
    <property type="evidence" value="ECO:0007669"/>
    <property type="project" value="InterPro"/>
</dbReference>
<dbReference type="CDD" id="cd02439">
    <property type="entry name" value="DMB-PRT_CobT"/>
    <property type="match status" value="1"/>
</dbReference>
<dbReference type="Gene3D" id="3.40.50.10210">
    <property type="match status" value="1"/>
</dbReference>
<dbReference type="HAMAP" id="MF_01086">
    <property type="entry name" value="UPF0284"/>
    <property type="match status" value="1"/>
</dbReference>
<dbReference type="InterPro" id="IPR003200">
    <property type="entry name" value="Nict_dMeBzImd_PRibTrfase"/>
</dbReference>
<dbReference type="InterPro" id="IPR002805">
    <property type="entry name" value="Nict_dMeBzImd_PRibTrfase_arc"/>
</dbReference>
<dbReference type="InterPro" id="IPR036087">
    <property type="entry name" value="Nict_dMeBzImd_PRibTrfase_sf"/>
</dbReference>
<dbReference type="NCBIfam" id="TIGR00303">
    <property type="entry name" value="nicotinate mononucleotide-dependent phosphoribosyltransferase CobT"/>
    <property type="match status" value="1"/>
</dbReference>
<dbReference type="NCBIfam" id="NF003368">
    <property type="entry name" value="PRK04447.1-1"/>
    <property type="match status" value="1"/>
</dbReference>
<dbReference type="NCBIfam" id="NF003372">
    <property type="entry name" value="PRK04447.1-5"/>
    <property type="match status" value="1"/>
</dbReference>
<dbReference type="PANTHER" id="PTHR38811">
    <property type="match status" value="1"/>
</dbReference>
<dbReference type="PANTHER" id="PTHR38811:SF1">
    <property type="entry name" value="UPF0284 PROTEIN SLL1500"/>
    <property type="match status" value="1"/>
</dbReference>
<dbReference type="SUPFAM" id="SSF52733">
    <property type="entry name" value="Nicotinate mononucleotide:5,6-dimethylbenzimidazole phosphoribosyltransferase (CobT)"/>
    <property type="match status" value="1"/>
</dbReference>
<evidence type="ECO:0000255" key="1">
    <source>
        <dbReference type="HAMAP-Rule" id="MF_01086"/>
    </source>
</evidence>
<sequence>MKLEPQIMAIVIGTTDISLIPGISVAGASPELTHYTPALDVEYLLLGMPKTMEVIPVTPEGIPTPALVTRAVAGEVAKLVVNAGSRITPKVPYVDLGGEPGRDFRRGPALSCEAARNILERGRALGCELGRLGCIYIGESIPGGTTTAMAILVAMGYDAWGRTSSASPNNPKELKIAVVKEGLRRVSAPLKPLEAVCEMGDPVHLAVAAIALGVSECGGVPVLAGGTQMAAAAALYKGLGGDLAKLHVATTRWIAEDKSADFMGLMEIVGVKNVYIAGVSFAGSKYEGLRAYERGAVKEGVAMGGALFYALSKGKDVLRLVEAEYERLLSAGVAGNVN</sequence>
<accession>Q8ZZ93</accession>
<feature type="chain" id="PRO_0000151056" description="UPF0284 protein PAE0372">
    <location>
        <begin position="1"/>
        <end position="338"/>
    </location>
</feature>
<organism>
    <name type="scientific">Pyrobaculum aerophilum (strain ATCC 51768 / DSM 7523 / JCM 9630 / CIP 104966 / NBRC 100827 / IM2)</name>
    <dbReference type="NCBI Taxonomy" id="178306"/>
    <lineage>
        <taxon>Archaea</taxon>
        <taxon>Thermoproteota</taxon>
        <taxon>Thermoprotei</taxon>
        <taxon>Thermoproteales</taxon>
        <taxon>Thermoproteaceae</taxon>
        <taxon>Pyrobaculum</taxon>
    </lineage>
</organism>
<protein>
    <recommendedName>
        <fullName evidence="1">UPF0284 protein PAE0372</fullName>
    </recommendedName>
</protein>
<reference key="1">
    <citation type="journal article" date="2002" name="Proc. Natl. Acad. Sci. U.S.A.">
        <title>Genome sequence of the hyperthermophilic crenarchaeon Pyrobaculum aerophilum.</title>
        <authorList>
            <person name="Fitz-Gibbon S.T."/>
            <person name="Ladner H."/>
            <person name="Kim U.-J."/>
            <person name="Stetter K.O."/>
            <person name="Simon M.I."/>
            <person name="Miller J.H."/>
        </authorList>
    </citation>
    <scope>NUCLEOTIDE SEQUENCE [LARGE SCALE GENOMIC DNA]</scope>
    <source>
        <strain>ATCC 51768 / DSM 7523 / JCM 9630 / CIP 104966 / NBRC 100827 / IM2</strain>
    </source>
</reference>
<gene>
    <name type="ordered locus">PAE0372</name>
</gene>